<comment type="function">
    <text evidence="1">Catalyzes the radical-mediated insertion of two sulfur atoms into the C-6 and C-8 positions of the octanoyl moiety bound to the lipoyl domains of lipoate-dependent enzymes, thereby converting the octanoylated domains into lipoylated derivatives.</text>
</comment>
<comment type="catalytic activity">
    <reaction evidence="1">
        <text>[[Fe-S] cluster scaffold protein carrying a second [4Fe-4S](2+) cluster] + N(6)-octanoyl-L-lysyl-[protein] + 2 oxidized [2Fe-2S]-[ferredoxin] + 2 S-adenosyl-L-methionine + 4 H(+) = [[Fe-S] cluster scaffold protein] + N(6)-[(R)-dihydrolipoyl]-L-lysyl-[protein] + 4 Fe(3+) + 2 hydrogen sulfide + 2 5'-deoxyadenosine + 2 L-methionine + 2 reduced [2Fe-2S]-[ferredoxin]</text>
        <dbReference type="Rhea" id="RHEA:16585"/>
        <dbReference type="Rhea" id="RHEA-COMP:9928"/>
        <dbReference type="Rhea" id="RHEA-COMP:10000"/>
        <dbReference type="Rhea" id="RHEA-COMP:10001"/>
        <dbReference type="Rhea" id="RHEA-COMP:10475"/>
        <dbReference type="Rhea" id="RHEA-COMP:14568"/>
        <dbReference type="Rhea" id="RHEA-COMP:14569"/>
        <dbReference type="ChEBI" id="CHEBI:15378"/>
        <dbReference type="ChEBI" id="CHEBI:17319"/>
        <dbReference type="ChEBI" id="CHEBI:29034"/>
        <dbReference type="ChEBI" id="CHEBI:29919"/>
        <dbReference type="ChEBI" id="CHEBI:33722"/>
        <dbReference type="ChEBI" id="CHEBI:33737"/>
        <dbReference type="ChEBI" id="CHEBI:33738"/>
        <dbReference type="ChEBI" id="CHEBI:57844"/>
        <dbReference type="ChEBI" id="CHEBI:59789"/>
        <dbReference type="ChEBI" id="CHEBI:78809"/>
        <dbReference type="ChEBI" id="CHEBI:83100"/>
        <dbReference type="EC" id="2.8.1.8"/>
    </reaction>
</comment>
<comment type="cofactor">
    <cofactor evidence="1">
        <name>[4Fe-4S] cluster</name>
        <dbReference type="ChEBI" id="CHEBI:49883"/>
    </cofactor>
    <text evidence="1">Binds 2 [4Fe-4S] clusters per subunit. One cluster is coordinated with 3 cysteines and an exchangeable S-adenosyl-L-methionine.</text>
</comment>
<comment type="pathway">
    <text evidence="1">Protein modification; protein lipoylation via endogenous pathway; protein N(6)-(lipoyl)lysine from octanoyl-[acyl-carrier-protein]: step 2/2.</text>
</comment>
<comment type="subcellular location">
    <subcellularLocation>
        <location evidence="1">Cytoplasm</location>
    </subcellularLocation>
</comment>
<comment type="similarity">
    <text evidence="1">Belongs to the radical SAM superfamily. Lipoyl synthase family.</text>
</comment>
<feature type="chain" id="PRO_1000124630" description="Lipoyl synthase">
    <location>
        <begin position="1"/>
        <end position="321"/>
    </location>
</feature>
<feature type="domain" description="Radical SAM core" evidence="2">
    <location>
        <begin position="80"/>
        <end position="297"/>
    </location>
</feature>
<feature type="binding site" evidence="1">
    <location>
        <position position="68"/>
    </location>
    <ligand>
        <name>[4Fe-4S] cluster</name>
        <dbReference type="ChEBI" id="CHEBI:49883"/>
        <label>1</label>
    </ligand>
</feature>
<feature type="binding site" evidence="1">
    <location>
        <position position="73"/>
    </location>
    <ligand>
        <name>[4Fe-4S] cluster</name>
        <dbReference type="ChEBI" id="CHEBI:49883"/>
        <label>1</label>
    </ligand>
</feature>
<feature type="binding site" evidence="1">
    <location>
        <position position="79"/>
    </location>
    <ligand>
        <name>[4Fe-4S] cluster</name>
        <dbReference type="ChEBI" id="CHEBI:49883"/>
        <label>1</label>
    </ligand>
</feature>
<feature type="binding site" evidence="1">
    <location>
        <position position="94"/>
    </location>
    <ligand>
        <name>[4Fe-4S] cluster</name>
        <dbReference type="ChEBI" id="CHEBI:49883"/>
        <label>2</label>
        <note>4Fe-4S-S-AdoMet</note>
    </ligand>
</feature>
<feature type="binding site" evidence="1">
    <location>
        <position position="98"/>
    </location>
    <ligand>
        <name>[4Fe-4S] cluster</name>
        <dbReference type="ChEBI" id="CHEBI:49883"/>
        <label>2</label>
        <note>4Fe-4S-S-AdoMet</note>
    </ligand>
</feature>
<feature type="binding site" evidence="1">
    <location>
        <position position="101"/>
    </location>
    <ligand>
        <name>[4Fe-4S] cluster</name>
        <dbReference type="ChEBI" id="CHEBI:49883"/>
        <label>2</label>
        <note>4Fe-4S-S-AdoMet</note>
    </ligand>
</feature>
<feature type="binding site" evidence="1">
    <location>
        <position position="308"/>
    </location>
    <ligand>
        <name>[4Fe-4S] cluster</name>
        <dbReference type="ChEBI" id="CHEBI:49883"/>
        <label>1</label>
    </ligand>
</feature>
<dbReference type="EC" id="2.8.1.8" evidence="1"/>
<dbReference type="EMBL" id="FM180568">
    <property type="protein sequence ID" value="CAS08076.1"/>
    <property type="molecule type" value="Genomic_DNA"/>
</dbReference>
<dbReference type="RefSeq" id="WP_000042632.1">
    <property type="nucleotide sequence ID" value="NC_011601.1"/>
</dbReference>
<dbReference type="SMR" id="B7UKR9"/>
<dbReference type="GeneID" id="93776854"/>
<dbReference type="KEGG" id="ecg:E2348C_0528"/>
<dbReference type="HOGENOM" id="CLU_033144_2_1_6"/>
<dbReference type="UniPathway" id="UPA00538">
    <property type="reaction ID" value="UER00593"/>
</dbReference>
<dbReference type="Proteomes" id="UP000008205">
    <property type="component" value="Chromosome"/>
</dbReference>
<dbReference type="GO" id="GO:0005737">
    <property type="term" value="C:cytoplasm"/>
    <property type="evidence" value="ECO:0007669"/>
    <property type="project" value="UniProtKB-SubCell"/>
</dbReference>
<dbReference type="GO" id="GO:0051539">
    <property type="term" value="F:4 iron, 4 sulfur cluster binding"/>
    <property type="evidence" value="ECO:0007669"/>
    <property type="project" value="UniProtKB-UniRule"/>
</dbReference>
<dbReference type="GO" id="GO:0016992">
    <property type="term" value="F:lipoate synthase activity"/>
    <property type="evidence" value="ECO:0007669"/>
    <property type="project" value="UniProtKB-UniRule"/>
</dbReference>
<dbReference type="GO" id="GO:0046872">
    <property type="term" value="F:metal ion binding"/>
    <property type="evidence" value="ECO:0007669"/>
    <property type="project" value="UniProtKB-KW"/>
</dbReference>
<dbReference type="CDD" id="cd01335">
    <property type="entry name" value="Radical_SAM"/>
    <property type="match status" value="1"/>
</dbReference>
<dbReference type="FunFam" id="3.20.20.70:FF:000023">
    <property type="entry name" value="Lipoyl synthase"/>
    <property type="match status" value="1"/>
</dbReference>
<dbReference type="Gene3D" id="3.20.20.70">
    <property type="entry name" value="Aldolase class I"/>
    <property type="match status" value="1"/>
</dbReference>
<dbReference type="HAMAP" id="MF_00206">
    <property type="entry name" value="Lipoyl_synth"/>
    <property type="match status" value="1"/>
</dbReference>
<dbReference type="InterPro" id="IPR013785">
    <property type="entry name" value="Aldolase_TIM"/>
</dbReference>
<dbReference type="InterPro" id="IPR006638">
    <property type="entry name" value="Elp3/MiaA/NifB-like_rSAM"/>
</dbReference>
<dbReference type="InterPro" id="IPR031691">
    <property type="entry name" value="LIAS_N"/>
</dbReference>
<dbReference type="InterPro" id="IPR003698">
    <property type="entry name" value="Lipoyl_synth"/>
</dbReference>
<dbReference type="InterPro" id="IPR007197">
    <property type="entry name" value="rSAM"/>
</dbReference>
<dbReference type="NCBIfam" id="TIGR00510">
    <property type="entry name" value="lipA"/>
    <property type="match status" value="1"/>
</dbReference>
<dbReference type="NCBIfam" id="NF004019">
    <property type="entry name" value="PRK05481.1"/>
    <property type="match status" value="1"/>
</dbReference>
<dbReference type="NCBIfam" id="NF009544">
    <property type="entry name" value="PRK12928.1"/>
    <property type="match status" value="1"/>
</dbReference>
<dbReference type="PANTHER" id="PTHR10949">
    <property type="entry name" value="LIPOYL SYNTHASE"/>
    <property type="match status" value="1"/>
</dbReference>
<dbReference type="PANTHER" id="PTHR10949:SF0">
    <property type="entry name" value="LIPOYL SYNTHASE, MITOCHONDRIAL"/>
    <property type="match status" value="1"/>
</dbReference>
<dbReference type="Pfam" id="PF16881">
    <property type="entry name" value="LIAS_N"/>
    <property type="match status" value="1"/>
</dbReference>
<dbReference type="Pfam" id="PF04055">
    <property type="entry name" value="Radical_SAM"/>
    <property type="match status" value="1"/>
</dbReference>
<dbReference type="PIRSF" id="PIRSF005963">
    <property type="entry name" value="Lipoyl_synth"/>
    <property type="match status" value="1"/>
</dbReference>
<dbReference type="SFLD" id="SFLDF00271">
    <property type="entry name" value="lipoyl_synthase"/>
    <property type="match status" value="1"/>
</dbReference>
<dbReference type="SFLD" id="SFLDG01058">
    <property type="entry name" value="lipoyl_synthase_like"/>
    <property type="match status" value="1"/>
</dbReference>
<dbReference type="SMART" id="SM00729">
    <property type="entry name" value="Elp3"/>
    <property type="match status" value="1"/>
</dbReference>
<dbReference type="SUPFAM" id="SSF102114">
    <property type="entry name" value="Radical SAM enzymes"/>
    <property type="match status" value="1"/>
</dbReference>
<dbReference type="PROSITE" id="PS51918">
    <property type="entry name" value="RADICAL_SAM"/>
    <property type="match status" value="1"/>
</dbReference>
<gene>
    <name evidence="1" type="primary">lipA</name>
    <name type="ordered locus">E2348C_0528</name>
</gene>
<evidence type="ECO:0000255" key="1">
    <source>
        <dbReference type="HAMAP-Rule" id="MF_00206"/>
    </source>
</evidence>
<evidence type="ECO:0000255" key="2">
    <source>
        <dbReference type="PROSITE-ProRule" id="PRU01266"/>
    </source>
</evidence>
<organism>
    <name type="scientific">Escherichia coli O127:H6 (strain E2348/69 / EPEC)</name>
    <dbReference type="NCBI Taxonomy" id="574521"/>
    <lineage>
        <taxon>Bacteria</taxon>
        <taxon>Pseudomonadati</taxon>
        <taxon>Pseudomonadota</taxon>
        <taxon>Gammaproteobacteria</taxon>
        <taxon>Enterobacterales</taxon>
        <taxon>Enterobacteriaceae</taxon>
        <taxon>Escherichia</taxon>
    </lineage>
</organism>
<protein>
    <recommendedName>
        <fullName evidence="1">Lipoyl synthase</fullName>
        <ecNumber evidence="1">2.8.1.8</ecNumber>
    </recommendedName>
    <alternativeName>
        <fullName evidence="1">Lip-syn</fullName>
        <shortName evidence="1">LS</shortName>
    </alternativeName>
    <alternativeName>
        <fullName evidence="1">Lipoate synthase</fullName>
    </alternativeName>
    <alternativeName>
        <fullName evidence="1">Lipoic acid synthase</fullName>
    </alternativeName>
    <alternativeName>
        <fullName evidence="1">Sulfur insertion protein LipA</fullName>
    </alternativeName>
</protein>
<proteinExistence type="inferred from homology"/>
<keyword id="KW-0004">4Fe-4S</keyword>
<keyword id="KW-0963">Cytoplasm</keyword>
<keyword id="KW-0408">Iron</keyword>
<keyword id="KW-0411">Iron-sulfur</keyword>
<keyword id="KW-0479">Metal-binding</keyword>
<keyword id="KW-1185">Reference proteome</keyword>
<keyword id="KW-0949">S-adenosyl-L-methionine</keyword>
<keyword id="KW-0808">Transferase</keyword>
<accession>B7UKR9</accession>
<name>LIPA_ECO27</name>
<reference key="1">
    <citation type="journal article" date="2009" name="J. Bacteriol.">
        <title>Complete genome sequence and comparative genome analysis of enteropathogenic Escherichia coli O127:H6 strain E2348/69.</title>
        <authorList>
            <person name="Iguchi A."/>
            <person name="Thomson N.R."/>
            <person name="Ogura Y."/>
            <person name="Saunders D."/>
            <person name="Ooka T."/>
            <person name="Henderson I.R."/>
            <person name="Harris D."/>
            <person name="Asadulghani M."/>
            <person name="Kurokawa K."/>
            <person name="Dean P."/>
            <person name="Kenny B."/>
            <person name="Quail M.A."/>
            <person name="Thurston S."/>
            <person name="Dougan G."/>
            <person name="Hayashi T."/>
            <person name="Parkhill J."/>
            <person name="Frankel G."/>
        </authorList>
    </citation>
    <scope>NUCLEOTIDE SEQUENCE [LARGE SCALE GENOMIC DNA]</scope>
    <source>
        <strain>E2348/69 / EPEC</strain>
    </source>
</reference>
<sequence length="321" mass="36072">MSKPIVMERGVKYRDADKMALIPVKNVATEREALLRKPEWMKIKLPADSTRIQGIKAAMRKNGLHSVCEEASCPNLAECFNHGTATFMILGAICTRRCPFCDVAHGRPVAPDANEPVKLAQTIADMALRYVVITSVDRDDLRDGGAQHFADCITAIREKSPQIKIETLVPDFRGRMDRALDILTATPPDVFNHNLENVPRIYRQVRPGADYNWSLKLLERFKEAHPEIPTKSGLMVGLGETNEEIIEVMRDLRRHGVTMLTLGQYLQPSRHHLPVQRYVSPDEFDEMKAEALAMGFTHAACGPFVRSSYHADLQAKGMEVK</sequence>